<dbReference type="EC" id="1.17.7.4" evidence="1"/>
<dbReference type="EMBL" id="AP011115">
    <property type="protein sequence ID" value="BAH54179.1"/>
    <property type="molecule type" value="Genomic_DNA"/>
</dbReference>
<dbReference type="RefSeq" id="WP_015889670.1">
    <property type="nucleotide sequence ID" value="NC_012522.1"/>
</dbReference>
<dbReference type="SMR" id="C1AYI4"/>
<dbReference type="STRING" id="632772.ROP_59320"/>
<dbReference type="KEGG" id="rop:ROP_59320"/>
<dbReference type="PATRIC" id="fig|632772.20.peg.6197"/>
<dbReference type="HOGENOM" id="CLU_027486_1_0_11"/>
<dbReference type="OrthoDB" id="9804068at2"/>
<dbReference type="UniPathway" id="UPA00056">
    <property type="reaction ID" value="UER00097"/>
</dbReference>
<dbReference type="UniPathway" id="UPA00059">
    <property type="reaction ID" value="UER00105"/>
</dbReference>
<dbReference type="Proteomes" id="UP000002212">
    <property type="component" value="Chromosome"/>
</dbReference>
<dbReference type="GO" id="GO:0051539">
    <property type="term" value="F:4 iron, 4 sulfur cluster binding"/>
    <property type="evidence" value="ECO:0007669"/>
    <property type="project" value="UniProtKB-UniRule"/>
</dbReference>
<dbReference type="GO" id="GO:0051745">
    <property type="term" value="F:4-hydroxy-3-methylbut-2-enyl diphosphate reductase activity"/>
    <property type="evidence" value="ECO:0007669"/>
    <property type="project" value="UniProtKB-UniRule"/>
</dbReference>
<dbReference type="GO" id="GO:0046872">
    <property type="term" value="F:metal ion binding"/>
    <property type="evidence" value="ECO:0007669"/>
    <property type="project" value="UniProtKB-KW"/>
</dbReference>
<dbReference type="GO" id="GO:0050992">
    <property type="term" value="P:dimethylallyl diphosphate biosynthetic process"/>
    <property type="evidence" value="ECO:0007669"/>
    <property type="project" value="UniProtKB-UniRule"/>
</dbReference>
<dbReference type="GO" id="GO:0019288">
    <property type="term" value="P:isopentenyl diphosphate biosynthetic process, methylerythritol 4-phosphate pathway"/>
    <property type="evidence" value="ECO:0007669"/>
    <property type="project" value="UniProtKB-UniRule"/>
</dbReference>
<dbReference type="GO" id="GO:0016114">
    <property type="term" value="P:terpenoid biosynthetic process"/>
    <property type="evidence" value="ECO:0007669"/>
    <property type="project" value="UniProtKB-UniRule"/>
</dbReference>
<dbReference type="CDD" id="cd13944">
    <property type="entry name" value="lytB_ispH"/>
    <property type="match status" value="1"/>
</dbReference>
<dbReference type="Gene3D" id="3.40.50.11270">
    <property type="match status" value="1"/>
</dbReference>
<dbReference type="Gene3D" id="3.40.1010.20">
    <property type="entry name" value="4-hydroxy-3-methylbut-2-enyl diphosphate reductase, catalytic domain"/>
    <property type="match status" value="2"/>
</dbReference>
<dbReference type="HAMAP" id="MF_00191">
    <property type="entry name" value="IspH"/>
    <property type="match status" value="1"/>
</dbReference>
<dbReference type="InterPro" id="IPR003451">
    <property type="entry name" value="LytB/IspH"/>
</dbReference>
<dbReference type="NCBIfam" id="TIGR00216">
    <property type="entry name" value="ispH_lytB"/>
    <property type="match status" value="1"/>
</dbReference>
<dbReference type="NCBIfam" id="NF002188">
    <property type="entry name" value="PRK01045.1-2"/>
    <property type="match status" value="1"/>
</dbReference>
<dbReference type="NCBIfam" id="NF002189">
    <property type="entry name" value="PRK01045.1-3"/>
    <property type="match status" value="1"/>
</dbReference>
<dbReference type="NCBIfam" id="NF002190">
    <property type="entry name" value="PRK01045.1-4"/>
    <property type="match status" value="1"/>
</dbReference>
<dbReference type="PANTHER" id="PTHR30426">
    <property type="entry name" value="4-HYDROXY-3-METHYLBUT-2-ENYL DIPHOSPHATE REDUCTASE"/>
    <property type="match status" value="1"/>
</dbReference>
<dbReference type="PANTHER" id="PTHR30426:SF0">
    <property type="entry name" value="4-HYDROXY-3-METHYLBUT-2-ENYL DIPHOSPHATE REDUCTASE"/>
    <property type="match status" value="1"/>
</dbReference>
<dbReference type="Pfam" id="PF02401">
    <property type="entry name" value="LYTB"/>
    <property type="match status" value="1"/>
</dbReference>
<organism>
    <name type="scientific">Rhodococcus opacus (strain B4)</name>
    <dbReference type="NCBI Taxonomy" id="632772"/>
    <lineage>
        <taxon>Bacteria</taxon>
        <taxon>Bacillati</taxon>
        <taxon>Actinomycetota</taxon>
        <taxon>Actinomycetes</taxon>
        <taxon>Mycobacteriales</taxon>
        <taxon>Nocardiaceae</taxon>
        <taxon>Rhodococcus</taxon>
    </lineage>
</organism>
<gene>
    <name evidence="1" type="primary">ispH</name>
    <name type="ordered locus">ROP_59320</name>
</gene>
<name>ISPH_RHOOB</name>
<evidence type="ECO:0000255" key="1">
    <source>
        <dbReference type="HAMAP-Rule" id="MF_00191"/>
    </source>
</evidence>
<proteinExistence type="inferred from homology"/>
<sequence>MSSAVPLNVGITRSADSGASRADGEKRVLLAEPRGYCAGVDRAVETVEKALEKHGAPIYVRKEIVHNRHVVETLSDQGVVFVDETDEVPEGALLVFSAHGVSPAVHESAAARNLRTIDATCPLVTKVHQEAKRFARDDFDILLIGHEGHEEVEGTAGEAPDHVQLVDGPDSVDAVTVRDESKVIWLSQTTLSVDETMQTVARLRERFPSLQDPPSDDICYATQNRQVAVKAMAPECDLVIVVGSRNSSNSVRLVEVALGAGAKASYLVDYAREVDPAWLDGVRTVGITSGASVPEILVRGVIDLLDEHGFHDVQPVTTANETLVFALPRELRAART</sequence>
<accession>C1AYI4</accession>
<feature type="chain" id="PRO_1000124291" description="4-hydroxy-3-methylbut-2-enyl diphosphate reductase">
    <location>
        <begin position="1"/>
        <end position="336"/>
    </location>
</feature>
<feature type="active site" description="Proton donor" evidence="1">
    <location>
        <position position="151"/>
    </location>
</feature>
<feature type="binding site" evidence="1">
    <location>
        <position position="37"/>
    </location>
    <ligand>
        <name>[4Fe-4S] cluster</name>
        <dbReference type="ChEBI" id="CHEBI:49883"/>
    </ligand>
</feature>
<feature type="binding site" evidence="1">
    <location>
        <position position="66"/>
    </location>
    <ligand>
        <name>(2E)-4-hydroxy-3-methylbut-2-enyl diphosphate</name>
        <dbReference type="ChEBI" id="CHEBI:128753"/>
    </ligand>
</feature>
<feature type="binding site" evidence="1">
    <location>
        <position position="66"/>
    </location>
    <ligand>
        <name>dimethylallyl diphosphate</name>
        <dbReference type="ChEBI" id="CHEBI:57623"/>
    </ligand>
</feature>
<feature type="binding site" evidence="1">
    <location>
        <position position="66"/>
    </location>
    <ligand>
        <name>isopentenyl diphosphate</name>
        <dbReference type="ChEBI" id="CHEBI:128769"/>
    </ligand>
</feature>
<feature type="binding site" evidence="1">
    <location>
        <position position="99"/>
    </location>
    <ligand>
        <name>(2E)-4-hydroxy-3-methylbut-2-enyl diphosphate</name>
        <dbReference type="ChEBI" id="CHEBI:128753"/>
    </ligand>
</feature>
<feature type="binding site" evidence="1">
    <location>
        <position position="99"/>
    </location>
    <ligand>
        <name>dimethylallyl diphosphate</name>
        <dbReference type="ChEBI" id="CHEBI:57623"/>
    </ligand>
</feature>
<feature type="binding site" evidence="1">
    <location>
        <position position="99"/>
    </location>
    <ligand>
        <name>isopentenyl diphosphate</name>
        <dbReference type="ChEBI" id="CHEBI:128769"/>
    </ligand>
</feature>
<feature type="binding site" evidence="1">
    <location>
        <position position="121"/>
    </location>
    <ligand>
        <name>[4Fe-4S] cluster</name>
        <dbReference type="ChEBI" id="CHEBI:49883"/>
    </ligand>
</feature>
<feature type="binding site" evidence="1">
    <location>
        <position position="149"/>
    </location>
    <ligand>
        <name>(2E)-4-hydroxy-3-methylbut-2-enyl diphosphate</name>
        <dbReference type="ChEBI" id="CHEBI:128753"/>
    </ligand>
</feature>
<feature type="binding site" evidence="1">
    <location>
        <position position="149"/>
    </location>
    <ligand>
        <name>dimethylallyl diphosphate</name>
        <dbReference type="ChEBI" id="CHEBI:57623"/>
    </ligand>
</feature>
<feature type="binding site" evidence="1">
    <location>
        <position position="149"/>
    </location>
    <ligand>
        <name>isopentenyl diphosphate</name>
        <dbReference type="ChEBI" id="CHEBI:128769"/>
    </ligand>
</feature>
<feature type="binding site" evidence="1">
    <location>
        <position position="189"/>
    </location>
    <ligand>
        <name>(2E)-4-hydroxy-3-methylbut-2-enyl diphosphate</name>
        <dbReference type="ChEBI" id="CHEBI:128753"/>
    </ligand>
</feature>
<feature type="binding site" evidence="1">
    <location>
        <position position="219"/>
    </location>
    <ligand>
        <name>[4Fe-4S] cluster</name>
        <dbReference type="ChEBI" id="CHEBI:49883"/>
    </ligand>
</feature>
<feature type="binding site" evidence="1">
    <location>
        <position position="247"/>
    </location>
    <ligand>
        <name>(2E)-4-hydroxy-3-methylbut-2-enyl diphosphate</name>
        <dbReference type="ChEBI" id="CHEBI:128753"/>
    </ligand>
</feature>
<feature type="binding site" evidence="1">
    <location>
        <position position="247"/>
    </location>
    <ligand>
        <name>dimethylallyl diphosphate</name>
        <dbReference type="ChEBI" id="CHEBI:57623"/>
    </ligand>
</feature>
<feature type="binding site" evidence="1">
    <location>
        <position position="247"/>
    </location>
    <ligand>
        <name>isopentenyl diphosphate</name>
        <dbReference type="ChEBI" id="CHEBI:128769"/>
    </ligand>
</feature>
<feature type="binding site" evidence="1">
    <location>
        <position position="248"/>
    </location>
    <ligand>
        <name>(2E)-4-hydroxy-3-methylbut-2-enyl diphosphate</name>
        <dbReference type="ChEBI" id="CHEBI:128753"/>
    </ligand>
</feature>
<feature type="binding site" evidence="1">
    <location>
        <position position="248"/>
    </location>
    <ligand>
        <name>dimethylallyl diphosphate</name>
        <dbReference type="ChEBI" id="CHEBI:57623"/>
    </ligand>
</feature>
<feature type="binding site" evidence="1">
    <location>
        <position position="248"/>
    </location>
    <ligand>
        <name>isopentenyl diphosphate</name>
        <dbReference type="ChEBI" id="CHEBI:128769"/>
    </ligand>
</feature>
<feature type="binding site" evidence="1">
    <location>
        <position position="249"/>
    </location>
    <ligand>
        <name>(2E)-4-hydroxy-3-methylbut-2-enyl diphosphate</name>
        <dbReference type="ChEBI" id="CHEBI:128753"/>
    </ligand>
</feature>
<feature type="binding site" evidence="1">
    <location>
        <position position="249"/>
    </location>
    <ligand>
        <name>dimethylallyl diphosphate</name>
        <dbReference type="ChEBI" id="CHEBI:57623"/>
    </ligand>
</feature>
<feature type="binding site" evidence="1">
    <location>
        <position position="249"/>
    </location>
    <ligand>
        <name>isopentenyl diphosphate</name>
        <dbReference type="ChEBI" id="CHEBI:128769"/>
    </ligand>
</feature>
<feature type="binding site" evidence="1">
    <location>
        <position position="292"/>
    </location>
    <ligand>
        <name>(2E)-4-hydroxy-3-methylbut-2-enyl diphosphate</name>
        <dbReference type="ChEBI" id="CHEBI:128753"/>
    </ligand>
</feature>
<feature type="binding site" evidence="1">
    <location>
        <position position="292"/>
    </location>
    <ligand>
        <name>dimethylallyl diphosphate</name>
        <dbReference type="ChEBI" id="CHEBI:57623"/>
    </ligand>
</feature>
<feature type="binding site" evidence="1">
    <location>
        <position position="292"/>
    </location>
    <ligand>
        <name>isopentenyl diphosphate</name>
        <dbReference type="ChEBI" id="CHEBI:128769"/>
    </ligand>
</feature>
<reference key="1">
    <citation type="submission" date="2009-03" db="EMBL/GenBank/DDBJ databases">
        <title>Comparison of the complete genome sequences of Rhodococcus erythropolis PR4 and Rhodococcus opacus B4.</title>
        <authorList>
            <person name="Takarada H."/>
            <person name="Sekine M."/>
            <person name="Hosoyama A."/>
            <person name="Yamada R."/>
            <person name="Fujisawa T."/>
            <person name="Omata S."/>
            <person name="Shimizu A."/>
            <person name="Tsukatani N."/>
            <person name="Tanikawa S."/>
            <person name="Fujita N."/>
            <person name="Harayama S."/>
        </authorList>
    </citation>
    <scope>NUCLEOTIDE SEQUENCE [LARGE SCALE GENOMIC DNA]</scope>
    <source>
        <strain>B4</strain>
    </source>
</reference>
<keyword id="KW-0004">4Fe-4S</keyword>
<keyword id="KW-0408">Iron</keyword>
<keyword id="KW-0411">Iron-sulfur</keyword>
<keyword id="KW-0414">Isoprene biosynthesis</keyword>
<keyword id="KW-0479">Metal-binding</keyword>
<keyword id="KW-0560">Oxidoreductase</keyword>
<comment type="function">
    <text evidence="1">Catalyzes the conversion of 1-hydroxy-2-methyl-2-(E)-butenyl 4-diphosphate (HMBPP) into a mixture of isopentenyl diphosphate (IPP) and dimethylallyl diphosphate (DMAPP). Acts in the terminal step of the DOXP/MEP pathway for isoprenoid precursor biosynthesis.</text>
</comment>
<comment type="catalytic activity">
    <reaction evidence="1">
        <text>isopentenyl diphosphate + 2 oxidized [2Fe-2S]-[ferredoxin] + H2O = (2E)-4-hydroxy-3-methylbut-2-enyl diphosphate + 2 reduced [2Fe-2S]-[ferredoxin] + 2 H(+)</text>
        <dbReference type="Rhea" id="RHEA:24488"/>
        <dbReference type="Rhea" id="RHEA-COMP:10000"/>
        <dbReference type="Rhea" id="RHEA-COMP:10001"/>
        <dbReference type="ChEBI" id="CHEBI:15377"/>
        <dbReference type="ChEBI" id="CHEBI:15378"/>
        <dbReference type="ChEBI" id="CHEBI:33737"/>
        <dbReference type="ChEBI" id="CHEBI:33738"/>
        <dbReference type="ChEBI" id="CHEBI:128753"/>
        <dbReference type="ChEBI" id="CHEBI:128769"/>
        <dbReference type="EC" id="1.17.7.4"/>
    </reaction>
</comment>
<comment type="catalytic activity">
    <reaction evidence="1">
        <text>dimethylallyl diphosphate + 2 oxidized [2Fe-2S]-[ferredoxin] + H2O = (2E)-4-hydroxy-3-methylbut-2-enyl diphosphate + 2 reduced [2Fe-2S]-[ferredoxin] + 2 H(+)</text>
        <dbReference type="Rhea" id="RHEA:24825"/>
        <dbReference type="Rhea" id="RHEA-COMP:10000"/>
        <dbReference type="Rhea" id="RHEA-COMP:10001"/>
        <dbReference type="ChEBI" id="CHEBI:15377"/>
        <dbReference type="ChEBI" id="CHEBI:15378"/>
        <dbReference type="ChEBI" id="CHEBI:33737"/>
        <dbReference type="ChEBI" id="CHEBI:33738"/>
        <dbReference type="ChEBI" id="CHEBI:57623"/>
        <dbReference type="ChEBI" id="CHEBI:128753"/>
        <dbReference type="EC" id="1.17.7.4"/>
    </reaction>
</comment>
<comment type="cofactor">
    <cofactor evidence="1">
        <name>[4Fe-4S] cluster</name>
        <dbReference type="ChEBI" id="CHEBI:49883"/>
    </cofactor>
    <text evidence="1">Binds 1 [4Fe-4S] cluster per subunit.</text>
</comment>
<comment type="pathway">
    <text evidence="1">Isoprenoid biosynthesis; dimethylallyl diphosphate biosynthesis; dimethylallyl diphosphate from (2E)-4-hydroxy-3-methylbutenyl diphosphate: step 1/1.</text>
</comment>
<comment type="pathway">
    <text evidence="1">Isoprenoid biosynthesis; isopentenyl diphosphate biosynthesis via DXP pathway; isopentenyl diphosphate from 1-deoxy-D-xylulose 5-phosphate: step 6/6.</text>
</comment>
<comment type="similarity">
    <text evidence="1">Belongs to the IspH family.</text>
</comment>
<protein>
    <recommendedName>
        <fullName evidence="1">4-hydroxy-3-methylbut-2-enyl diphosphate reductase</fullName>
        <shortName evidence="1">HMBPP reductase</shortName>
        <ecNumber evidence="1">1.17.7.4</ecNumber>
    </recommendedName>
</protein>